<name>RS3A_BRACM</name>
<gene>
    <name evidence="1" type="primary">RPS3A</name>
    <name type="synonym">BIS289</name>
</gene>
<protein>
    <recommendedName>
        <fullName evidence="1">Small ribosomal subunit protein eS1</fullName>
    </recommendedName>
    <alternativeName>
        <fullName evidence="2">40S ribosomal protein S3a</fullName>
    </alternativeName>
    <alternativeName>
        <fullName>S phase-specific protein BIS289</fullName>
    </alternativeName>
</protein>
<comment type="subunit">
    <text evidence="1">Component of the small ribosomal subunit. Mature ribosomes consist of a small (40S) and a large (60S) subunit. The 40S subunit contains about 33 different proteins and 1 molecule of RNA (18S). The 60S subunit contains about 49 different proteins and 3 molecules of RNA (25S, 5.8S and 5S).</text>
</comment>
<comment type="subcellular location">
    <subcellularLocation>
        <location evidence="1">Cytoplasm</location>
    </subcellularLocation>
</comment>
<comment type="similarity">
    <text evidence="1">Belongs to the eukaryotic ribosomal protein eS1 family.</text>
</comment>
<proteinExistence type="evidence at transcript level"/>
<keyword id="KW-0963">Cytoplasm</keyword>
<keyword id="KW-1185">Reference proteome</keyword>
<keyword id="KW-0687">Ribonucleoprotein</keyword>
<keyword id="KW-0689">Ribosomal protein</keyword>
<dbReference type="EMBL" id="Z25769">
    <property type="protein sequence ID" value="CAA81030.1"/>
    <property type="molecule type" value="mRNA"/>
</dbReference>
<dbReference type="EMBL" id="L23553">
    <property type="protein sequence ID" value="AAA33013.1"/>
    <property type="molecule type" value="mRNA"/>
</dbReference>
<dbReference type="PIR" id="S36622">
    <property type="entry name" value="S36622"/>
</dbReference>
<dbReference type="RefSeq" id="NP_001288829.1">
    <property type="nucleotide sequence ID" value="NM_001301900.1"/>
</dbReference>
<dbReference type="SMR" id="P49396"/>
<dbReference type="GeneID" id="103249169"/>
<dbReference type="KEGG" id="brp:103249169"/>
<dbReference type="OrthoDB" id="9834376at2759"/>
<dbReference type="Proteomes" id="UP000011750">
    <property type="component" value="Unplaced"/>
</dbReference>
<dbReference type="GO" id="GO:0005829">
    <property type="term" value="C:cytosol"/>
    <property type="evidence" value="ECO:0000318"/>
    <property type="project" value="GO_Central"/>
</dbReference>
<dbReference type="GO" id="GO:0022627">
    <property type="term" value="C:cytosolic small ribosomal subunit"/>
    <property type="evidence" value="ECO:0007669"/>
    <property type="project" value="UniProtKB-UniRule"/>
</dbReference>
<dbReference type="GO" id="GO:0003735">
    <property type="term" value="F:structural constituent of ribosome"/>
    <property type="evidence" value="ECO:0007669"/>
    <property type="project" value="UniProtKB-UniRule"/>
</dbReference>
<dbReference type="GO" id="GO:0006412">
    <property type="term" value="P:translation"/>
    <property type="evidence" value="ECO:0007669"/>
    <property type="project" value="UniProtKB-UniRule"/>
</dbReference>
<dbReference type="HAMAP" id="MF_03122">
    <property type="entry name" value="Ribosomal_eS1_euk"/>
    <property type="match status" value="1"/>
</dbReference>
<dbReference type="InterPro" id="IPR001593">
    <property type="entry name" value="Ribosomal_eS1"/>
</dbReference>
<dbReference type="InterPro" id="IPR018281">
    <property type="entry name" value="Ribosomal_eS1_CS"/>
</dbReference>
<dbReference type="InterPro" id="IPR027500">
    <property type="entry name" value="Ribosomal_eS1_euk"/>
</dbReference>
<dbReference type="PANTHER" id="PTHR11830">
    <property type="entry name" value="40S RIBOSOMAL PROTEIN S3A"/>
    <property type="match status" value="1"/>
</dbReference>
<dbReference type="Pfam" id="PF01015">
    <property type="entry name" value="Ribosomal_S3Ae"/>
    <property type="match status" value="1"/>
</dbReference>
<dbReference type="SMART" id="SM01397">
    <property type="entry name" value="Ribosomal_S3Ae"/>
    <property type="match status" value="1"/>
</dbReference>
<dbReference type="PROSITE" id="PS01191">
    <property type="entry name" value="RIBOSOMAL_S3AE"/>
    <property type="match status" value="1"/>
</dbReference>
<feature type="chain" id="PRO_0000153533" description="Small ribosomal subunit protein eS1">
    <location>
        <begin position="1"/>
        <end position="262"/>
    </location>
</feature>
<organism>
    <name type="scientific">Brassica campestris</name>
    <name type="common">Field mustard</name>
    <dbReference type="NCBI Taxonomy" id="3711"/>
    <lineage>
        <taxon>Eukaryota</taxon>
        <taxon>Viridiplantae</taxon>
        <taxon>Streptophyta</taxon>
        <taxon>Embryophyta</taxon>
        <taxon>Tracheophyta</taxon>
        <taxon>Spermatophyta</taxon>
        <taxon>Magnoliopsida</taxon>
        <taxon>eudicotyledons</taxon>
        <taxon>Gunneridae</taxon>
        <taxon>Pentapetalae</taxon>
        <taxon>rosids</taxon>
        <taxon>malvids</taxon>
        <taxon>Brassicales</taxon>
        <taxon>Brassicaceae</taxon>
        <taxon>Brassiceae</taxon>
        <taxon>Brassica</taxon>
    </lineage>
</organism>
<evidence type="ECO:0000255" key="1">
    <source>
        <dbReference type="HAMAP-Rule" id="MF_03122"/>
    </source>
</evidence>
<evidence type="ECO:0000305" key="2"/>
<reference key="1">
    <citation type="submission" date="1993-08" db="EMBL/GenBank/DDBJ databases">
        <authorList>
            <person name="Shin C."/>
            <person name="Song S."/>
            <person name="Choi Y."/>
        </authorList>
    </citation>
    <scope>NUCLEOTIDE SEQUENCE [MRNA]</scope>
</reference>
<accession>P49396</accession>
<sequence length="262" mass="30049">MAVGKNKRISKGRKGGKKKIVDPFAKKDWYDIKAPSSFTHRNVGKTLVSRTQGTKIASEGLKHRVFEVSLADLNKDEDQAYRKIRLRAEDVQGRNVLTQFWGMDFTTDKLRSLVKKWQTLIESHVDVKTTDNYTLRLFCIAFTKRRANQVKRTCYAQSSQIRQIRSKMREIMIKEEASSCDLKELVAKFIPESIGKDIEKATQGIYPLQNVFIRKVKILKAPKFDLRKLMEVHGDYTAEDVGVKVDRPADEVVEEPTEIIGA</sequence>